<keyword id="KW-0007">Acetylation</keyword>
<keyword id="KW-0249">Electron transport</keyword>
<keyword id="KW-0472">Membrane</keyword>
<keyword id="KW-0496">Mitochondrion</keyword>
<keyword id="KW-0999">Mitochondrion inner membrane</keyword>
<keyword id="KW-1185">Reference proteome</keyword>
<keyword id="KW-0679">Respiratory chain</keyword>
<keyword id="KW-0813">Transport</keyword>
<sequence length="114" mass="12970">YETEKNNGAGYFLEHLAFKGTKNRPGNALEKHLSSVSRVYEEDAVPGLTPCRNALVSHLDGTTPVCEDIGRRIPLAEWESRYFYDQCPAVAGYGPIEQLPDYNRIRSGMFWLRF</sequence>
<dbReference type="SMR" id="P86201"/>
<dbReference type="STRING" id="10036.ENSMAUP00000008917"/>
<dbReference type="Proteomes" id="UP000189706">
    <property type="component" value="Unplaced"/>
</dbReference>
<dbReference type="GO" id="GO:0005743">
    <property type="term" value="C:mitochondrial inner membrane"/>
    <property type="evidence" value="ECO:0007669"/>
    <property type="project" value="UniProtKB-SubCell"/>
</dbReference>
<dbReference type="GO" id="GO:0046872">
    <property type="term" value="F:metal ion binding"/>
    <property type="evidence" value="ECO:0007669"/>
    <property type="project" value="InterPro"/>
</dbReference>
<dbReference type="Gene3D" id="3.30.830.10">
    <property type="entry name" value="Metalloenzyme, LuxS/M16 peptidase-like"/>
    <property type="match status" value="2"/>
</dbReference>
<dbReference type="InterPro" id="IPR011249">
    <property type="entry name" value="Metalloenz_LuxS/M16"/>
</dbReference>
<dbReference type="InterPro" id="IPR011765">
    <property type="entry name" value="Pept_M16_N"/>
</dbReference>
<dbReference type="Pfam" id="PF00675">
    <property type="entry name" value="Peptidase_M16"/>
    <property type="match status" value="1"/>
</dbReference>
<dbReference type="SUPFAM" id="SSF63411">
    <property type="entry name" value="LuxS/MPP-like metallohydrolase"/>
    <property type="match status" value="1"/>
</dbReference>
<protein>
    <recommendedName>
        <fullName evidence="3">Cytochrome b-c1 complex subunit 1, mitochondrial</fullName>
    </recommendedName>
    <alternativeName>
        <fullName evidence="3">Complex III subunit 1</fullName>
    </alternativeName>
    <alternativeName>
        <fullName evidence="3">Core protein I</fullName>
    </alternativeName>
    <alternativeName>
        <fullName evidence="3">Ubiquinol-cytochrome-c reductase complex core protein 1</fullName>
    </alternativeName>
</protein>
<name>QCR1_MESAU</name>
<organism>
    <name type="scientific">Mesocricetus auratus</name>
    <name type="common">Golden hamster</name>
    <dbReference type="NCBI Taxonomy" id="10036"/>
    <lineage>
        <taxon>Eukaryota</taxon>
        <taxon>Metazoa</taxon>
        <taxon>Chordata</taxon>
        <taxon>Craniata</taxon>
        <taxon>Vertebrata</taxon>
        <taxon>Euteleostomi</taxon>
        <taxon>Mammalia</taxon>
        <taxon>Eutheria</taxon>
        <taxon>Euarchontoglires</taxon>
        <taxon>Glires</taxon>
        <taxon>Rodentia</taxon>
        <taxon>Myomorpha</taxon>
        <taxon>Muroidea</taxon>
        <taxon>Cricetidae</taxon>
        <taxon>Cricetinae</taxon>
        <taxon>Mesocricetus</taxon>
    </lineage>
</organism>
<accession>P86201</accession>
<gene>
    <name evidence="3" type="primary">UQCRC1</name>
</gene>
<evidence type="ECO:0000250" key="1">
    <source>
        <dbReference type="UniProtKB" id="P07256"/>
    </source>
</evidence>
<evidence type="ECO:0000250" key="2">
    <source>
        <dbReference type="UniProtKB" id="P31800"/>
    </source>
</evidence>
<evidence type="ECO:0000250" key="3">
    <source>
        <dbReference type="UniProtKB" id="P31930"/>
    </source>
</evidence>
<evidence type="ECO:0000250" key="4">
    <source>
        <dbReference type="UniProtKB" id="Q9CZ13"/>
    </source>
</evidence>
<evidence type="ECO:0000255" key="5"/>
<evidence type="ECO:0000305" key="6"/>
<comment type="function">
    <text evidence="1 2 3">Component of the ubiquinol-cytochrome c oxidoreductase, a multisubunit transmembrane complex that is part of the mitochondrial electron transport chain which drives oxidative phosphorylation. The respiratory chain contains 3 multisubunit complexes succinate dehydrogenase (complex II, CII), ubiquinol-cytochrome c oxidoreductase (cytochrome b-c1 complex, complex III, CIII) and cytochrome c oxidase (complex IV, CIV), that cooperate to transfer electrons derived from NADH and succinate to molecular oxygen, creating an electrochemical gradient over the inner membrane that drives transmembrane transport and the ATP synthase. The cytochrome b-c1 complex catalyzes electron transfer from ubiquinol to cytochrome c, linking this redox reaction to translocation of protons across the mitochondrial inner membrane, with protons being carried across the membrane as hydrogens on the quinol. In the process called Q cycle, 2 protons are consumed from the matrix, 4 protons are released into the intermembrane space and 2 electrons are passed to cytochrome c (By similarity). The 2 core subunits UQCRC1/QCR1 and UQCRC2/QCR2 are homologous to the 2 mitochondrial-processing peptidase (MPP) subunits beta-MPP and alpha-MPP respectively, and they seem to have preserved their MPP processing properties. May be involved in the in situ processing of UQCRFS1 into the mature Rieske protein and its mitochondrial targeting sequence (MTS)/subunit 9 when incorporated into complex III (By similarity). Seems to play an important role in the maintenance of proper mitochondrial function in nigral dopaminergic neurons (By similarity).</text>
</comment>
<comment type="subunit">
    <text evidence="2 3 4">Component of the ubiquinol-cytochrome c oxidoreductase (cytochrome b-c1 complex, complex III, CIII), a multisubunit enzyme composed of 11 subunits. The complex is composed of 3 respiratory subunits cytochrome b, cytochrome c1 and Rieske protein UQCRFS1, 2 core protein subunits UQCRC1/QCR1 and UQCRC2/QCR2, and 6 low-molecular weight protein subunits UQCRH/QCR6, UQCRB/QCR7, UQCRQ/QCR8, UQCR10/QCR9, UQCR11/QCR10 and subunit 9, the cleavage product of Rieske protein UQCRFS1 (By similarity). The complex exists as an obligatory dimer and forms supercomplexes (SCs) in the inner mitochondrial membrane with NADH-ubiquinone oxidoreductase (complex I, CI) and cytochrome c oxidase (complex IV, CIV), resulting in different assemblies (supercomplex SCI(1)III(2)IV(1) and megacomplex MCI(2)III(2)IV(2)) (By similarity). Interacts with UQCC6 (By similarity). Interacts with STMP1 (By similarity).</text>
</comment>
<comment type="subcellular location">
    <subcellularLocation>
        <location evidence="1">Mitochondrion inner membrane</location>
        <topology evidence="1">Peripheral membrane protein</topology>
        <orientation evidence="1">Matrix side</orientation>
    </subcellularLocation>
</comment>
<comment type="similarity">
    <text evidence="5">Belongs to the peptidase M16 family. UQCRC1/QCR1 subfamily.</text>
</comment>
<proteinExistence type="evidence at protein level"/>
<reference key="1">
    <citation type="journal article" date="2010" name="Asian J. Androl.">
        <title>Glucose-regulated protein precursor (GRP78) and tumor rejection antigen (GP96) are unique to hamster caput epididymal spermatozoa.</title>
        <authorList>
            <person name="Kameshwari D.B."/>
            <person name="Bhande S."/>
            <person name="Sundaram C.S."/>
            <person name="Kota V."/>
            <person name="Siva A.B."/>
            <person name="Shivaji S."/>
        </authorList>
    </citation>
    <scope>IDENTIFICATION BY MASS SPECTROMETRY</scope>
</reference>
<feature type="chain" id="PRO_0000394400" description="Cytochrome b-c1 complex subunit 1, mitochondrial">
    <location>
        <begin position="1" status="less than"/>
        <end position="114"/>
    </location>
</feature>
<feature type="modified residue" description="N6-acetyllysine" evidence="3">
    <location>
        <position position="31"/>
    </location>
</feature>
<feature type="non-consecutive residues" evidence="6">
    <location>
        <begin position="31"/>
        <end position="32"/>
    </location>
</feature>
<feature type="non-consecutive residues" evidence="6">
    <location>
        <begin position="52"/>
        <end position="53"/>
    </location>
</feature>
<feature type="non-consecutive residues" evidence="6">
    <location>
        <begin position="71"/>
        <end position="72"/>
    </location>
</feature>
<feature type="non-consecutive residues" evidence="6">
    <location>
        <begin position="81"/>
        <end position="82"/>
    </location>
</feature>
<feature type="non-terminal residue">
    <location>
        <position position="1"/>
    </location>
</feature>